<dbReference type="EMBL" id="CP000950">
    <property type="protein sequence ID" value="ACA70481.1"/>
    <property type="molecule type" value="Genomic_DNA"/>
</dbReference>
<dbReference type="RefSeq" id="WP_002220756.1">
    <property type="nucleotide sequence ID" value="NZ_CP009792.1"/>
</dbReference>
<dbReference type="SMR" id="B1JRN1"/>
<dbReference type="GeneID" id="96663460"/>
<dbReference type="KEGG" id="ypy:YPK_4225"/>
<dbReference type="PATRIC" id="fig|502800.11.peg.575"/>
<dbReference type="GO" id="GO:0005886">
    <property type="term" value="C:plasma membrane"/>
    <property type="evidence" value="ECO:0007669"/>
    <property type="project" value="UniProtKB-SubCell"/>
</dbReference>
<dbReference type="GO" id="GO:0045259">
    <property type="term" value="C:proton-transporting ATP synthase complex"/>
    <property type="evidence" value="ECO:0007669"/>
    <property type="project" value="UniProtKB-KW"/>
</dbReference>
<dbReference type="GO" id="GO:0005524">
    <property type="term" value="F:ATP binding"/>
    <property type="evidence" value="ECO:0007669"/>
    <property type="project" value="UniProtKB-UniRule"/>
</dbReference>
<dbReference type="GO" id="GO:0046933">
    <property type="term" value="F:proton-transporting ATP synthase activity, rotational mechanism"/>
    <property type="evidence" value="ECO:0007669"/>
    <property type="project" value="UniProtKB-UniRule"/>
</dbReference>
<dbReference type="GO" id="GO:0042777">
    <property type="term" value="P:proton motive force-driven plasma membrane ATP synthesis"/>
    <property type="evidence" value="ECO:0007669"/>
    <property type="project" value="UniProtKB-UniRule"/>
</dbReference>
<dbReference type="CDD" id="cd12151">
    <property type="entry name" value="F1-ATPase_gamma"/>
    <property type="match status" value="1"/>
</dbReference>
<dbReference type="FunFam" id="1.10.287.80:FF:000005">
    <property type="entry name" value="ATP synthase gamma chain"/>
    <property type="match status" value="2"/>
</dbReference>
<dbReference type="FunFam" id="3.40.1380.10:FF:000001">
    <property type="entry name" value="ATP synthase gamma chain"/>
    <property type="match status" value="1"/>
</dbReference>
<dbReference type="Gene3D" id="3.40.1380.10">
    <property type="match status" value="1"/>
</dbReference>
<dbReference type="Gene3D" id="1.10.287.80">
    <property type="entry name" value="ATP synthase, gamma subunit, helix hairpin domain"/>
    <property type="match status" value="1"/>
</dbReference>
<dbReference type="HAMAP" id="MF_00815">
    <property type="entry name" value="ATP_synth_gamma_bact"/>
    <property type="match status" value="1"/>
</dbReference>
<dbReference type="InterPro" id="IPR035968">
    <property type="entry name" value="ATP_synth_F1_ATPase_gsu"/>
</dbReference>
<dbReference type="InterPro" id="IPR000131">
    <property type="entry name" value="ATP_synth_F1_gsu"/>
</dbReference>
<dbReference type="InterPro" id="IPR023632">
    <property type="entry name" value="ATP_synth_F1_gsu_CS"/>
</dbReference>
<dbReference type="NCBIfam" id="TIGR01146">
    <property type="entry name" value="ATPsyn_F1gamma"/>
    <property type="match status" value="1"/>
</dbReference>
<dbReference type="NCBIfam" id="NF004144">
    <property type="entry name" value="PRK05621.1-1"/>
    <property type="match status" value="1"/>
</dbReference>
<dbReference type="PANTHER" id="PTHR11693">
    <property type="entry name" value="ATP SYNTHASE GAMMA CHAIN"/>
    <property type="match status" value="1"/>
</dbReference>
<dbReference type="PANTHER" id="PTHR11693:SF22">
    <property type="entry name" value="ATP SYNTHASE SUBUNIT GAMMA, MITOCHONDRIAL"/>
    <property type="match status" value="1"/>
</dbReference>
<dbReference type="Pfam" id="PF00231">
    <property type="entry name" value="ATP-synt"/>
    <property type="match status" value="1"/>
</dbReference>
<dbReference type="PRINTS" id="PR00126">
    <property type="entry name" value="ATPASEGAMMA"/>
</dbReference>
<dbReference type="SUPFAM" id="SSF52943">
    <property type="entry name" value="ATP synthase (F1-ATPase), gamma subunit"/>
    <property type="match status" value="1"/>
</dbReference>
<dbReference type="PROSITE" id="PS00153">
    <property type="entry name" value="ATPASE_GAMMA"/>
    <property type="match status" value="1"/>
</dbReference>
<organism>
    <name type="scientific">Yersinia pseudotuberculosis serotype O:3 (strain YPIII)</name>
    <dbReference type="NCBI Taxonomy" id="502800"/>
    <lineage>
        <taxon>Bacteria</taxon>
        <taxon>Pseudomonadati</taxon>
        <taxon>Pseudomonadota</taxon>
        <taxon>Gammaproteobacteria</taxon>
        <taxon>Enterobacterales</taxon>
        <taxon>Yersiniaceae</taxon>
        <taxon>Yersinia</taxon>
    </lineage>
</organism>
<feature type="chain" id="PRO_1000134228" description="ATP synthase gamma chain">
    <location>
        <begin position="1"/>
        <end position="287"/>
    </location>
</feature>
<keyword id="KW-0066">ATP synthesis</keyword>
<keyword id="KW-0997">Cell inner membrane</keyword>
<keyword id="KW-1003">Cell membrane</keyword>
<keyword id="KW-0139">CF(1)</keyword>
<keyword id="KW-0375">Hydrogen ion transport</keyword>
<keyword id="KW-0406">Ion transport</keyword>
<keyword id="KW-0472">Membrane</keyword>
<keyword id="KW-0813">Transport</keyword>
<sequence length="287" mass="31578">MAGAKEIRSKIASVQNTQKITKAMEMVAASKMRKSQERMAASRPYAETMRSVIGHLALGNLEYKHPYLEERDVKRVGYLVVSTDRGLCGGLNINLFKRLLAEMKGWSEKGVECDLALIGSKAASFFGSVGGKIVAQVTGMGDNPSLSELIGPVKVMLQAYDEGRLDKLYIVNNKFINTMSQEPRIMQLLPLPPAEDGELKKKSWDYLYEPDPKALLDTLLRRYVESQVYQGVVENLASEQAARMVAMKAATDNGGSLIKELQLVYNKARQASITQELTEIVGGASAV</sequence>
<gene>
    <name evidence="1" type="primary">atpG</name>
    <name type="ordered locus">YPK_4225</name>
</gene>
<accession>B1JRN1</accession>
<name>ATPG_YERPY</name>
<reference key="1">
    <citation type="submission" date="2008-02" db="EMBL/GenBank/DDBJ databases">
        <title>Complete sequence of Yersinia pseudotuberculosis YPIII.</title>
        <authorList>
            <consortium name="US DOE Joint Genome Institute"/>
            <person name="Copeland A."/>
            <person name="Lucas S."/>
            <person name="Lapidus A."/>
            <person name="Glavina del Rio T."/>
            <person name="Dalin E."/>
            <person name="Tice H."/>
            <person name="Bruce D."/>
            <person name="Goodwin L."/>
            <person name="Pitluck S."/>
            <person name="Munk A.C."/>
            <person name="Brettin T."/>
            <person name="Detter J.C."/>
            <person name="Han C."/>
            <person name="Tapia R."/>
            <person name="Schmutz J."/>
            <person name="Larimer F."/>
            <person name="Land M."/>
            <person name="Hauser L."/>
            <person name="Challacombe J.F."/>
            <person name="Green L."/>
            <person name="Lindler L.E."/>
            <person name="Nikolich M.P."/>
            <person name="Richardson P."/>
        </authorList>
    </citation>
    <scope>NUCLEOTIDE SEQUENCE [LARGE SCALE GENOMIC DNA]</scope>
    <source>
        <strain>YPIII</strain>
    </source>
</reference>
<proteinExistence type="inferred from homology"/>
<evidence type="ECO:0000255" key="1">
    <source>
        <dbReference type="HAMAP-Rule" id="MF_00815"/>
    </source>
</evidence>
<protein>
    <recommendedName>
        <fullName evidence="1">ATP synthase gamma chain</fullName>
    </recommendedName>
    <alternativeName>
        <fullName evidence="1">ATP synthase F1 sector gamma subunit</fullName>
    </alternativeName>
    <alternativeName>
        <fullName evidence="1">F-ATPase gamma subunit</fullName>
    </alternativeName>
</protein>
<comment type="function">
    <text evidence="1">Produces ATP from ADP in the presence of a proton gradient across the membrane. The gamma chain is believed to be important in regulating ATPase activity and the flow of protons through the CF(0) complex.</text>
</comment>
<comment type="subunit">
    <text evidence="1">F-type ATPases have 2 components, CF(1) - the catalytic core - and CF(0) - the membrane proton channel. CF(1) has five subunits: alpha(3), beta(3), gamma(1), delta(1), epsilon(1). CF(0) has three main subunits: a, b and c.</text>
</comment>
<comment type="subcellular location">
    <subcellularLocation>
        <location evidence="1">Cell inner membrane</location>
        <topology evidence="1">Peripheral membrane protein</topology>
    </subcellularLocation>
</comment>
<comment type="similarity">
    <text evidence="1">Belongs to the ATPase gamma chain family.</text>
</comment>